<keyword id="KW-0560">Oxidoreductase</keyword>
<evidence type="ECO:0000255" key="1">
    <source>
        <dbReference type="HAMAP-Rule" id="MF_00712"/>
    </source>
</evidence>
<proteinExistence type="inferred from homology"/>
<comment type="function">
    <text evidence="1">The glycine cleavage system catalyzes the degradation of glycine. The P protein binds the alpha-amino group of glycine through its pyridoxal phosphate cofactor; CO(2) is released and the remaining methylamine moiety is then transferred to the lipoamide cofactor of the H protein.</text>
</comment>
<comment type="catalytic activity">
    <reaction evidence="1">
        <text>N(6)-[(R)-lipoyl]-L-lysyl-[glycine-cleavage complex H protein] + glycine + H(+) = N(6)-[(R)-S(8)-aminomethyldihydrolipoyl]-L-lysyl-[glycine-cleavage complex H protein] + CO2</text>
        <dbReference type="Rhea" id="RHEA:24304"/>
        <dbReference type="Rhea" id="RHEA-COMP:10494"/>
        <dbReference type="Rhea" id="RHEA-COMP:10495"/>
        <dbReference type="ChEBI" id="CHEBI:15378"/>
        <dbReference type="ChEBI" id="CHEBI:16526"/>
        <dbReference type="ChEBI" id="CHEBI:57305"/>
        <dbReference type="ChEBI" id="CHEBI:83099"/>
        <dbReference type="ChEBI" id="CHEBI:83143"/>
        <dbReference type="EC" id="1.4.4.2"/>
    </reaction>
</comment>
<comment type="subunit">
    <text evidence="1">The glycine cleavage system is composed of four proteins: P, T, L and H. In this organism, the P 'protein' is a heterodimer of two subunits.</text>
</comment>
<comment type="similarity">
    <text evidence="1">Belongs to the GcvP family. N-terminal subunit subfamily.</text>
</comment>
<reference key="1">
    <citation type="submission" date="2005-08" db="EMBL/GenBank/DDBJ databases">
        <title>Complete sequence of Chlorobium chlorochromatii CaD3.</title>
        <authorList>
            <consortium name="US DOE Joint Genome Institute"/>
            <person name="Copeland A."/>
            <person name="Lucas S."/>
            <person name="Lapidus A."/>
            <person name="Barry K."/>
            <person name="Detter J.C."/>
            <person name="Glavina T."/>
            <person name="Hammon N."/>
            <person name="Israni S."/>
            <person name="Pitluck S."/>
            <person name="Bryant D."/>
            <person name="Schmutz J."/>
            <person name="Larimer F."/>
            <person name="Land M."/>
            <person name="Kyrpides N."/>
            <person name="Ivanova N."/>
            <person name="Richardson P."/>
        </authorList>
    </citation>
    <scope>NUCLEOTIDE SEQUENCE [LARGE SCALE GENOMIC DNA]</scope>
    <source>
        <strain>CaD3</strain>
    </source>
</reference>
<name>GCSPA_CHLCH</name>
<accession>Q3APU1</accession>
<feature type="chain" id="PRO_1000045641" description="Probable glycine dehydrogenase (decarboxylating) subunit 1">
    <location>
        <begin position="1"/>
        <end position="445"/>
    </location>
</feature>
<gene>
    <name evidence="1" type="primary">gcvPA</name>
    <name type="ordered locus">Cag_1733</name>
</gene>
<protein>
    <recommendedName>
        <fullName evidence="1">Probable glycine dehydrogenase (decarboxylating) subunit 1</fullName>
        <ecNumber evidence="1">1.4.4.2</ecNumber>
    </recommendedName>
    <alternativeName>
        <fullName evidence="1">Glycine cleavage system P-protein subunit 1</fullName>
    </alternativeName>
    <alternativeName>
        <fullName evidence="1">Glycine decarboxylase subunit 1</fullName>
    </alternativeName>
    <alternativeName>
        <fullName evidence="1">Glycine dehydrogenase (aminomethyl-transferring) subunit 1</fullName>
    </alternativeName>
</protein>
<sequence length="445" mass="48071">MPFIATTESERTEMLQAIGVNSFDELIADIPYSVRLQRALELLPSLDEPQVRRLLERMAASNRCTAEYVSFLGGGAYDHFIPSAIKTIISRSEFYTAYTPYQAEVSQGTLQAIYEYQSLMCRLYGMDVANASMYDGATALAEAVLMAMNVTGRDQVVVAGKLHPHTTAVLKTYLEASGHQAIIQNALVDGRSDIAALKALVNQQVAAVVVQQPNFYGCLEEVEAIGAITHEQGAIFVVSADPLSLGVLAAPGSYGADIAVGEGQPLGSSQSFGGPYLGIFTVKQQLVRKIPGRLVGMTKDRDGEDGFILTLQTREQHIRREKATSNICSNQALNALQAAVYLSLLGKQGLQQVAAQSAQKAHYLANAIAALPGFSLKFTAPFFREFVVETPMPAAHLIEQMVEQRMFAGYDLATHGESGLLIAVTEQRTKEELDAFVAALSALKA</sequence>
<organism>
    <name type="scientific">Chlorobium chlorochromatii (strain CaD3)</name>
    <dbReference type="NCBI Taxonomy" id="340177"/>
    <lineage>
        <taxon>Bacteria</taxon>
        <taxon>Pseudomonadati</taxon>
        <taxon>Chlorobiota</taxon>
        <taxon>Chlorobiia</taxon>
        <taxon>Chlorobiales</taxon>
        <taxon>Chlorobiaceae</taxon>
        <taxon>Chlorobium/Pelodictyon group</taxon>
        <taxon>Chlorobium</taxon>
    </lineage>
</organism>
<dbReference type="EC" id="1.4.4.2" evidence="1"/>
<dbReference type="EMBL" id="CP000108">
    <property type="protein sequence ID" value="ABB28984.1"/>
    <property type="molecule type" value="Genomic_DNA"/>
</dbReference>
<dbReference type="SMR" id="Q3APU1"/>
<dbReference type="STRING" id="340177.Cag_1733"/>
<dbReference type="KEGG" id="cch:Cag_1733"/>
<dbReference type="eggNOG" id="COG0403">
    <property type="taxonomic scope" value="Bacteria"/>
</dbReference>
<dbReference type="HOGENOM" id="CLU_004620_0_2_10"/>
<dbReference type="OrthoDB" id="9801272at2"/>
<dbReference type="GO" id="GO:0004375">
    <property type="term" value="F:glycine dehydrogenase (decarboxylating) activity"/>
    <property type="evidence" value="ECO:0007669"/>
    <property type="project" value="UniProtKB-EC"/>
</dbReference>
<dbReference type="GO" id="GO:0019464">
    <property type="term" value="P:glycine decarboxylation via glycine cleavage system"/>
    <property type="evidence" value="ECO:0007669"/>
    <property type="project" value="UniProtKB-UniRule"/>
</dbReference>
<dbReference type="GO" id="GO:0009116">
    <property type="term" value="P:nucleoside metabolic process"/>
    <property type="evidence" value="ECO:0007669"/>
    <property type="project" value="InterPro"/>
</dbReference>
<dbReference type="CDD" id="cd00613">
    <property type="entry name" value="GDC-P"/>
    <property type="match status" value="1"/>
</dbReference>
<dbReference type="Gene3D" id="3.90.1150.10">
    <property type="entry name" value="Aspartate Aminotransferase, domain 1"/>
    <property type="match status" value="1"/>
</dbReference>
<dbReference type="Gene3D" id="3.40.640.10">
    <property type="entry name" value="Type I PLP-dependent aspartate aminotransferase-like (Major domain)"/>
    <property type="match status" value="1"/>
</dbReference>
<dbReference type="HAMAP" id="MF_00712">
    <property type="entry name" value="GcvPA"/>
    <property type="match status" value="1"/>
</dbReference>
<dbReference type="InterPro" id="IPR023010">
    <property type="entry name" value="GcvPA"/>
</dbReference>
<dbReference type="InterPro" id="IPR049315">
    <property type="entry name" value="GDC-P_N"/>
</dbReference>
<dbReference type="InterPro" id="IPR020581">
    <property type="entry name" value="GDC_P"/>
</dbReference>
<dbReference type="InterPro" id="IPR015424">
    <property type="entry name" value="PyrdxlP-dep_Trfase"/>
</dbReference>
<dbReference type="InterPro" id="IPR015421">
    <property type="entry name" value="PyrdxlP-dep_Trfase_major"/>
</dbReference>
<dbReference type="InterPro" id="IPR015422">
    <property type="entry name" value="PyrdxlP-dep_Trfase_small"/>
</dbReference>
<dbReference type="NCBIfam" id="NF001696">
    <property type="entry name" value="PRK00451.1"/>
    <property type="match status" value="1"/>
</dbReference>
<dbReference type="PANTHER" id="PTHR42806">
    <property type="entry name" value="GLYCINE CLEAVAGE SYSTEM P-PROTEIN"/>
    <property type="match status" value="1"/>
</dbReference>
<dbReference type="PANTHER" id="PTHR42806:SF1">
    <property type="entry name" value="GLYCINE DEHYDROGENASE (DECARBOXYLATING)"/>
    <property type="match status" value="1"/>
</dbReference>
<dbReference type="Pfam" id="PF02347">
    <property type="entry name" value="GDC-P"/>
    <property type="match status" value="1"/>
</dbReference>
<dbReference type="PIRSF" id="PIRSF006815">
    <property type="entry name" value="GcvPA"/>
    <property type="match status" value="1"/>
</dbReference>
<dbReference type="SUPFAM" id="SSF53383">
    <property type="entry name" value="PLP-dependent transferases"/>
    <property type="match status" value="1"/>
</dbReference>